<protein>
    <recommendedName>
        <fullName>US1 protein</fullName>
    </recommendedName>
</protein>
<accession>P32517</accession>
<proteinExistence type="inferred from homology"/>
<name>US02_EHV1K</name>
<organism>
    <name type="scientific">Equine herpesvirus 1 (strain Kentucky A)</name>
    <name type="common">EHV-1</name>
    <name type="synonym">Equine abortion virus</name>
    <dbReference type="NCBI Taxonomy" id="10329"/>
    <lineage>
        <taxon>Viruses</taxon>
        <taxon>Duplodnaviria</taxon>
        <taxon>Heunggongvirae</taxon>
        <taxon>Peploviricota</taxon>
        <taxon>Herviviricetes</taxon>
        <taxon>Herpesvirales</taxon>
        <taxon>Orthoherpesviridae</taxon>
        <taxon>Alphaherpesvirinae</taxon>
        <taxon>Varicellovirus</taxon>
        <taxon>Varicellovirus equidalpha1</taxon>
        <taxon>Equid alphaherpesvirus 1</taxon>
    </lineage>
</organism>
<dbReference type="EMBL" id="M87497">
    <property type="protein sequence ID" value="AAA46069.1"/>
    <property type="molecule type" value="Genomic_DNA"/>
</dbReference>
<dbReference type="PIR" id="A44215">
    <property type="entry name" value="A44215"/>
</dbReference>
<dbReference type="InterPro" id="IPR003485">
    <property type="entry name" value="Herpes_US2_varicellovirus"/>
</dbReference>
<dbReference type="Pfam" id="PF02476">
    <property type="entry name" value="US2"/>
    <property type="match status" value="1"/>
</dbReference>
<evidence type="ECO:0000256" key="1">
    <source>
        <dbReference type="SAM" id="MobiDB-lite"/>
    </source>
</evidence>
<evidence type="ECO:0000305" key="2"/>
<feature type="chain" id="PRO_0000116129" description="US1 protein">
    <location>
        <begin position="1"/>
        <end position="303"/>
    </location>
</feature>
<feature type="region of interest" description="Disordered" evidence="1">
    <location>
        <begin position="230"/>
        <end position="284"/>
    </location>
</feature>
<feature type="compositionally biased region" description="Low complexity" evidence="1">
    <location>
        <begin position="256"/>
        <end position="268"/>
    </location>
</feature>
<feature type="sequence conflict" description="In Ref. 2; AAA46069." evidence="2" ref="2">
    <original>E</original>
    <variation>G</variation>
    <location>
        <position position="31"/>
    </location>
</feature>
<gene>
    <name type="primary">US1</name>
</gene>
<comment type="similarity">
    <text evidence="2">Belongs to the herpesviridae US2 family.</text>
</comment>
<reference key="1">
    <citation type="journal article" date="1992" name="Virology">
        <title>Identification and transcriptional mapping of genes encoded at the IR/Us junction of equine herpesvirus type 1.</title>
        <authorList>
            <person name="Breeden C.A."/>
            <person name="Yalamanchili R.R."/>
            <person name="Colle C.F. III"/>
            <person name="O'Callaghan D.J."/>
        </authorList>
    </citation>
    <scope>NUCLEOTIDE SEQUENCE [GENOMIC DNA]</scope>
</reference>
<reference key="2">
    <citation type="journal article" date="1992" name="Virology">
        <title>Open reading frames encoding a protein kinase, homolog of glycoprotein gX of pseudorabies virus, and a novel glycoprotein map within the unique short segment of equine herpesvirus type 1.</title>
        <authorList>
            <person name="Colle C.F. III"/>
            <person name="Flowers C.C."/>
            <person name="O'Callaghan D.J."/>
        </authorList>
    </citation>
    <scope>NUCLEOTIDE SEQUENCE [GENOMIC DNA] OF 1-209</scope>
</reference>
<sequence>MGVVLITVVTVVDRHKALPNSSIDVDGHLWEFLSRQCFVLASEPLGIPIVVRSADLYRFSSSLLTLPKACRPIVRTRGDTAIALDRNGVVYHEDRMGVSIEWLSVLSGYNHLNSSLIINQPYHLWVLGAADLCKPVFDLIPGPKRMVYAEIADEFHKSWQPPFVCGKLFETIPWTTVEHNHPLKLRAAGGEDTVVGECGFSKHSSNSLVHPPTVNRVIYAVVDPARLREIPAPGRPLPRRRPSEGGMRAPRRRSRAPAPARSTAAAATPPRPGDPRAPAARRAGDVTWMERLLWGVFGRTSTR</sequence>
<organismHost>
    <name type="scientific">Equus caballus</name>
    <name type="common">Horse</name>
    <dbReference type="NCBI Taxonomy" id="9796"/>
</organismHost>